<accession>Q5F8I1</accession>
<proteinExistence type="inferred from homology"/>
<dbReference type="EC" id="2.3.1.181" evidence="1"/>
<dbReference type="EMBL" id="AE004969">
    <property type="protein sequence ID" value="AAW89506.2"/>
    <property type="molecule type" value="Genomic_DNA"/>
</dbReference>
<dbReference type="RefSeq" id="WP_003688623.1">
    <property type="nucleotide sequence ID" value="NC_002946.2"/>
</dbReference>
<dbReference type="SMR" id="Q5F8I1"/>
<dbReference type="STRING" id="242231.NGO_0792"/>
<dbReference type="GeneID" id="66753130"/>
<dbReference type="KEGG" id="ngo:NGO_0792"/>
<dbReference type="HOGENOM" id="CLU_035168_3_1_4"/>
<dbReference type="UniPathway" id="UPA00538">
    <property type="reaction ID" value="UER00592"/>
</dbReference>
<dbReference type="Proteomes" id="UP000000535">
    <property type="component" value="Chromosome"/>
</dbReference>
<dbReference type="GO" id="GO:0005737">
    <property type="term" value="C:cytoplasm"/>
    <property type="evidence" value="ECO:0007669"/>
    <property type="project" value="UniProtKB-SubCell"/>
</dbReference>
<dbReference type="GO" id="GO:0033819">
    <property type="term" value="F:lipoyl(octanoyl) transferase activity"/>
    <property type="evidence" value="ECO:0007669"/>
    <property type="project" value="UniProtKB-EC"/>
</dbReference>
<dbReference type="GO" id="GO:0036211">
    <property type="term" value="P:protein modification process"/>
    <property type="evidence" value="ECO:0007669"/>
    <property type="project" value="InterPro"/>
</dbReference>
<dbReference type="CDD" id="cd16444">
    <property type="entry name" value="LipB"/>
    <property type="match status" value="1"/>
</dbReference>
<dbReference type="FunFam" id="3.30.930.10:FF:000020">
    <property type="entry name" value="Octanoyltransferase"/>
    <property type="match status" value="1"/>
</dbReference>
<dbReference type="Gene3D" id="3.30.930.10">
    <property type="entry name" value="Bira Bifunctional Protein, Domain 2"/>
    <property type="match status" value="1"/>
</dbReference>
<dbReference type="HAMAP" id="MF_00013">
    <property type="entry name" value="LipB"/>
    <property type="match status" value="1"/>
</dbReference>
<dbReference type="InterPro" id="IPR045864">
    <property type="entry name" value="aa-tRNA-synth_II/BPL/LPL"/>
</dbReference>
<dbReference type="InterPro" id="IPR004143">
    <property type="entry name" value="BPL_LPL_catalytic"/>
</dbReference>
<dbReference type="InterPro" id="IPR000544">
    <property type="entry name" value="Octanoyltransferase"/>
</dbReference>
<dbReference type="InterPro" id="IPR020605">
    <property type="entry name" value="Octanoyltransferase_CS"/>
</dbReference>
<dbReference type="NCBIfam" id="TIGR00214">
    <property type="entry name" value="lipB"/>
    <property type="match status" value="1"/>
</dbReference>
<dbReference type="NCBIfam" id="NF010922">
    <property type="entry name" value="PRK14342.1"/>
    <property type="match status" value="1"/>
</dbReference>
<dbReference type="PANTHER" id="PTHR10993:SF7">
    <property type="entry name" value="LIPOYLTRANSFERASE 2, MITOCHONDRIAL-RELATED"/>
    <property type="match status" value="1"/>
</dbReference>
<dbReference type="PANTHER" id="PTHR10993">
    <property type="entry name" value="OCTANOYLTRANSFERASE"/>
    <property type="match status" value="1"/>
</dbReference>
<dbReference type="Pfam" id="PF21948">
    <property type="entry name" value="LplA-B_cat"/>
    <property type="match status" value="1"/>
</dbReference>
<dbReference type="PIRSF" id="PIRSF016262">
    <property type="entry name" value="LPLase"/>
    <property type="match status" value="1"/>
</dbReference>
<dbReference type="SUPFAM" id="SSF55681">
    <property type="entry name" value="Class II aaRS and biotin synthetases"/>
    <property type="match status" value="1"/>
</dbReference>
<dbReference type="PROSITE" id="PS51733">
    <property type="entry name" value="BPL_LPL_CATALYTIC"/>
    <property type="match status" value="1"/>
</dbReference>
<dbReference type="PROSITE" id="PS01313">
    <property type="entry name" value="LIPB"/>
    <property type="match status" value="1"/>
</dbReference>
<protein>
    <recommendedName>
        <fullName evidence="1">Octanoyltransferase</fullName>
        <ecNumber evidence="1">2.3.1.181</ecNumber>
    </recommendedName>
    <alternativeName>
        <fullName evidence="1">Lipoate-protein ligase B</fullName>
    </alternativeName>
    <alternativeName>
        <fullName evidence="1">Lipoyl/octanoyl transferase</fullName>
    </alternativeName>
    <alternativeName>
        <fullName evidence="1">Octanoyl-[acyl-carrier-protein]-protein N-octanoyltransferase</fullName>
    </alternativeName>
</protein>
<name>LIPB_NEIG1</name>
<feature type="chain" id="PRO_0000242734" description="Octanoyltransferase">
    <location>
        <begin position="1"/>
        <end position="207"/>
    </location>
</feature>
<feature type="domain" description="BPL/LPL catalytic" evidence="2">
    <location>
        <begin position="27"/>
        <end position="203"/>
    </location>
</feature>
<feature type="active site" description="Acyl-thioester intermediate" evidence="1">
    <location>
        <position position="164"/>
    </location>
</feature>
<feature type="binding site" evidence="1">
    <location>
        <begin position="66"/>
        <end position="73"/>
    </location>
    <ligand>
        <name>substrate</name>
    </ligand>
</feature>
<feature type="binding site" evidence="1">
    <location>
        <begin position="133"/>
        <end position="135"/>
    </location>
    <ligand>
        <name>substrate</name>
    </ligand>
</feature>
<feature type="binding site" evidence="1">
    <location>
        <begin position="146"/>
        <end position="148"/>
    </location>
    <ligand>
        <name>substrate</name>
    </ligand>
</feature>
<feature type="site" description="Lowers pKa of active site Cys" evidence="1">
    <location>
        <position position="130"/>
    </location>
</feature>
<organism>
    <name type="scientific">Neisseria gonorrhoeae (strain ATCC 700825 / FA 1090)</name>
    <dbReference type="NCBI Taxonomy" id="242231"/>
    <lineage>
        <taxon>Bacteria</taxon>
        <taxon>Pseudomonadati</taxon>
        <taxon>Pseudomonadota</taxon>
        <taxon>Betaproteobacteria</taxon>
        <taxon>Neisseriales</taxon>
        <taxon>Neisseriaceae</taxon>
        <taxon>Neisseria</taxon>
    </lineage>
</organism>
<keyword id="KW-0012">Acyltransferase</keyword>
<keyword id="KW-0963">Cytoplasm</keyword>
<keyword id="KW-1185">Reference proteome</keyword>
<keyword id="KW-0808">Transferase</keyword>
<reference key="1">
    <citation type="submission" date="2003-03" db="EMBL/GenBank/DDBJ databases">
        <title>The complete genome sequence of Neisseria gonorrhoeae.</title>
        <authorList>
            <person name="Lewis L.A."/>
            <person name="Gillaspy A.F."/>
            <person name="McLaughlin R.E."/>
            <person name="Gipson M."/>
            <person name="Ducey T.F."/>
            <person name="Ownbey T."/>
            <person name="Hartman K."/>
            <person name="Nydick C."/>
            <person name="Carson M.B."/>
            <person name="Vaughn J."/>
            <person name="Thomson C."/>
            <person name="Song L."/>
            <person name="Lin S."/>
            <person name="Yuan X."/>
            <person name="Najar F."/>
            <person name="Zhan M."/>
            <person name="Ren Q."/>
            <person name="Zhu H."/>
            <person name="Qi S."/>
            <person name="Kenton S.M."/>
            <person name="Lai H."/>
            <person name="White J.D."/>
            <person name="Clifton S."/>
            <person name="Roe B.A."/>
            <person name="Dyer D.W."/>
        </authorList>
    </citation>
    <scope>NUCLEOTIDE SEQUENCE [LARGE SCALE GENOMIC DNA]</scope>
    <source>
        <strain>ATCC 700825 / FA 1090</strain>
    </source>
</reference>
<evidence type="ECO:0000255" key="1">
    <source>
        <dbReference type="HAMAP-Rule" id="MF_00013"/>
    </source>
</evidence>
<evidence type="ECO:0000255" key="2">
    <source>
        <dbReference type="PROSITE-ProRule" id="PRU01067"/>
    </source>
</evidence>
<sequence length="207" mass="22798">MKIIHKGLVEYLPTFEAMKTFNAGRNADTEDELWVVEHPPVFTQGLAGKPEHLLIRDDIPVVQIDRGGQITYHGPGQLVVYTMIDFKRRKTSVRNIVSALENSIIATLAEYGIEAAADPKRPGIYVGERKIASLGLRIKNGSVYHGLALNVNMDLSPFTQINPCGYAGMEMTQIADFVQPCPAPDEVASKLTAHLETQLTPKADNNE</sequence>
<gene>
    <name evidence="1" type="primary">lipB</name>
    <name type="ordered locus">NGO_0792</name>
</gene>
<comment type="function">
    <text evidence="1">Catalyzes the transfer of endogenously produced octanoic acid from octanoyl-acyl-carrier-protein onto the lipoyl domains of lipoate-dependent enzymes. Lipoyl-ACP can also act as a substrate although octanoyl-ACP is likely to be the physiological substrate.</text>
</comment>
<comment type="catalytic activity">
    <reaction evidence="1">
        <text>octanoyl-[ACP] + L-lysyl-[protein] = N(6)-octanoyl-L-lysyl-[protein] + holo-[ACP] + H(+)</text>
        <dbReference type="Rhea" id="RHEA:17665"/>
        <dbReference type="Rhea" id="RHEA-COMP:9636"/>
        <dbReference type="Rhea" id="RHEA-COMP:9685"/>
        <dbReference type="Rhea" id="RHEA-COMP:9752"/>
        <dbReference type="Rhea" id="RHEA-COMP:9928"/>
        <dbReference type="ChEBI" id="CHEBI:15378"/>
        <dbReference type="ChEBI" id="CHEBI:29969"/>
        <dbReference type="ChEBI" id="CHEBI:64479"/>
        <dbReference type="ChEBI" id="CHEBI:78463"/>
        <dbReference type="ChEBI" id="CHEBI:78809"/>
        <dbReference type="EC" id="2.3.1.181"/>
    </reaction>
</comment>
<comment type="pathway">
    <text evidence="1">Protein modification; protein lipoylation via endogenous pathway; protein N(6)-(lipoyl)lysine from octanoyl-[acyl-carrier-protein]: step 1/2.</text>
</comment>
<comment type="subcellular location">
    <subcellularLocation>
        <location evidence="1">Cytoplasm</location>
    </subcellularLocation>
</comment>
<comment type="miscellaneous">
    <text evidence="1">In the reaction, the free carboxyl group of octanoic acid is attached via an amide linkage to the epsilon-amino group of a specific lysine residue of lipoyl domains of lipoate-dependent enzymes.</text>
</comment>
<comment type="similarity">
    <text evidence="1">Belongs to the LipB family.</text>
</comment>